<feature type="chain" id="PRO_0000297469" description="Erythronate-4-phosphate dehydrogenase">
    <location>
        <begin position="1"/>
        <end position="376"/>
    </location>
</feature>
<feature type="active site" evidence="1">
    <location>
        <position position="209"/>
    </location>
</feature>
<feature type="active site" evidence="1">
    <location>
        <position position="238"/>
    </location>
</feature>
<feature type="active site" description="Proton donor" evidence="1">
    <location>
        <position position="255"/>
    </location>
</feature>
<feature type="binding site" evidence="1">
    <location>
        <position position="45"/>
    </location>
    <ligand>
        <name>substrate</name>
    </ligand>
</feature>
<feature type="binding site" evidence="1">
    <location>
        <position position="67"/>
    </location>
    <ligand>
        <name>substrate</name>
    </ligand>
</feature>
<feature type="binding site" evidence="1">
    <location>
        <position position="147"/>
    </location>
    <ligand>
        <name>NAD(+)</name>
        <dbReference type="ChEBI" id="CHEBI:57540"/>
    </ligand>
</feature>
<feature type="binding site" evidence="1">
    <location>
        <position position="233"/>
    </location>
    <ligand>
        <name>NAD(+)</name>
        <dbReference type="ChEBI" id="CHEBI:57540"/>
    </ligand>
</feature>
<feature type="binding site" evidence="1">
    <location>
        <position position="258"/>
    </location>
    <ligand>
        <name>NAD(+)</name>
        <dbReference type="ChEBI" id="CHEBI:57540"/>
    </ligand>
</feature>
<feature type="binding site" evidence="1">
    <location>
        <position position="259"/>
    </location>
    <ligand>
        <name>substrate</name>
    </ligand>
</feature>
<comment type="function">
    <text evidence="1">Catalyzes the oxidation of erythronate-4-phosphate to 3-hydroxy-2-oxo-4-phosphonooxybutanoate.</text>
</comment>
<comment type="catalytic activity">
    <reaction evidence="1">
        <text>4-phospho-D-erythronate + NAD(+) = (R)-3-hydroxy-2-oxo-4-phosphooxybutanoate + NADH + H(+)</text>
        <dbReference type="Rhea" id="RHEA:18829"/>
        <dbReference type="ChEBI" id="CHEBI:15378"/>
        <dbReference type="ChEBI" id="CHEBI:57540"/>
        <dbReference type="ChEBI" id="CHEBI:57945"/>
        <dbReference type="ChEBI" id="CHEBI:58538"/>
        <dbReference type="ChEBI" id="CHEBI:58766"/>
        <dbReference type="EC" id="1.1.1.290"/>
    </reaction>
</comment>
<comment type="pathway">
    <text evidence="1">Cofactor biosynthesis; pyridoxine 5'-phosphate biosynthesis; pyridoxine 5'-phosphate from D-erythrose 4-phosphate: step 2/5.</text>
</comment>
<comment type="subunit">
    <text evidence="1">Homodimer.</text>
</comment>
<comment type="subcellular location">
    <subcellularLocation>
        <location evidence="1">Cytoplasm</location>
    </subcellularLocation>
</comment>
<comment type="similarity">
    <text evidence="1">Belongs to the D-isomer specific 2-hydroxyacid dehydrogenase family. PdxB subfamily.</text>
</comment>
<name>PDXB_SHESA</name>
<accession>A0KV91</accession>
<keyword id="KW-0963">Cytoplasm</keyword>
<keyword id="KW-0520">NAD</keyword>
<keyword id="KW-0560">Oxidoreductase</keyword>
<keyword id="KW-0664">Pyridoxine biosynthesis</keyword>
<protein>
    <recommendedName>
        <fullName evidence="1">Erythronate-4-phosphate dehydrogenase</fullName>
        <ecNumber evidence="1">1.1.1.290</ecNumber>
    </recommendedName>
</protein>
<dbReference type="EC" id="1.1.1.290" evidence="1"/>
<dbReference type="EMBL" id="CP000469">
    <property type="protein sequence ID" value="ABK47710.1"/>
    <property type="molecule type" value="Genomic_DNA"/>
</dbReference>
<dbReference type="RefSeq" id="WP_011716533.1">
    <property type="nucleotide sequence ID" value="NC_008577.1"/>
</dbReference>
<dbReference type="SMR" id="A0KV91"/>
<dbReference type="STRING" id="94122.Shewana3_1476"/>
<dbReference type="KEGG" id="shn:Shewana3_1476"/>
<dbReference type="eggNOG" id="COG0111">
    <property type="taxonomic scope" value="Bacteria"/>
</dbReference>
<dbReference type="HOGENOM" id="CLU_019796_4_0_6"/>
<dbReference type="OrthoDB" id="9770208at2"/>
<dbReference type="UniPathway" id="UPA00244">
    <property type="reaction ID" value="UER00310"/>
</dbReference>
<dbReference type="Proteomes" id="UP000002589">
    <property type="component" value="Chromosome"/>
</dbReference>
<dbReference type="GO" id="GO:0005737">
    <property type="term" value="C:cytoplasm"/>
    <property type="evidence" value="ECO:0007669"/>
    <property type="project" value="UniProtKB-SubCell"/>
</dbReference>
<dbReference type="GO" id="GO:0033711">
    <property type="term" value="F:4-phosphoerythronate dehydrogenase activity"/>
    <property type="evidence" value="ECO:0007669"/>
    <property type="project" value="UniProtKB-EC"/>
</dbReference>
<dbReference type="GO" id="GO:0051287">
    <property type="term" value="F:NAD binding"/>
    <property type="evidence" value="ECO:0007669"/>
    <property type="project" value="InterPro"/>
</dbReference>
<dbReference type="GO" id="GO:0046983">
    <property type="term" value="F:protein dimerization activity"/>
    <property type="evidence" value="ECO:0007669"/>
    <property type="project" value="InterPro"/>
</dbReference>
<dbReference type="GO" id="GO:0008615">
    <property type="term" value="P:pyridoxine biosynthetic process"/>
    <property type="evidence" value="ECO:0007669"/>
    <property type="project" value="UniProtKB-UniRule"/>
</dbReference>
<dbReference type="CDD" id="cd12158">
    <property type="entry name" value="ErythrP_dh"/>
    <property type="match status" value="1"/>
</dbReference>
<dbReference type="FunFam" id="3.40.50.720:FF:000890">
    <property type="entry name" value="Erythronate-4-phosphate dehydrogenase"/>
    <property type="match status" value="1"/>
</dbReference>
<dbReference type="Gene3D" id="3.30.1370.170">
    <property type="match status" value="1"/>
</dbReference>
<dbReference type="Gene3D" id="3.40.50.720">
    <property type="entry name" value="NAD(P)-binding Rossmann-like Domain"/>
    <property type="match status" value="2"/>
</dbReference>
<dbReference type="HAMAP" id="MF_01825">
    <property type="entry name" value="PdxB"/>
    <property type="match status" value="1"/>
</dbReference>
<dbReference type="InterPro" id="IPR050418">
    <property type="entry name" value="D-iso_2-hydroxyacid_DH_PdxB"/>
</dbReference>
<dbReference type="InterPro" id="IPR006139">
    <property type="entry name" value="D-isomer_2_OHA_DH_cat_dom"/>
</dbReference>
<dbReference type="InterPro" id="IPR029753">
    <property type="entry name" value="D-isomer_DH_CS"/>
</dbReference>
<dbReference type="InterPro" id="IPR006140">
    <property type="entry name" value="D-isomer_DH_NAD-bd"/>
</dbReference>
<dbReference type="InterPro" id="IPR020921">
    <property type="entry name" value="Erythronate-4-P_DHase"/>
</dbReference>
<dbReference type="InterPro" id="IPR024531">
    <property type="entry name" value="Erythronate-4-P_DHase_dimer"/>
</dbReference>
<dbReference type="InterPro" id="IPR036291">
    <property type="entry name" value="NAD(P)-bd_dom_sf"/>
</dbReference>
<dbReference type="InterPro" id="IPR038251">
    <property type="entry name" value="PdxB_dimer_sf"/>
</dbReference>
<dbReference type="PANTHER" id="PTHR43761:SF1">
    <property type="entry name" value="D-ISOMER SPECIFIC 2-HYDROXYACID DEHYDROGENASE CATALYTIC DOMAIN-CONTAINING PROTEIN-RELATED"/>
    <property type="match status" value="1"/>
</dbReference>
<dbReference type="PANTHER" id="PTHR43761">
    <property type="entry name" value="D-ISOMER SPECIFIC 2-HYDROXYACID DEHYDROGENASE FAMILY PROTEIN (AFU_ORTHOLOGUE AFUA_1G13630)"/>
    <property type="match status" value="1"/>
</dbReference>
<dbReference type="Pfam" id="PF00389">
    <property type="entry name" value="2-Hacid_dh"/>
    <property type="match status" value="1"/>
</dbReference>
<dbReference type="Pfam" id="PF02826">
    <property type="entry name" value="2-Hacid_dh_C"/>
    <property type="match status" value="1"/>
</dbReference>
<dbReference type="Pfam" id="PF11890">
    <property type="entry name" value="DUF3410"/>
    <property type="match status" value="1"/>
</dbReference>
<dbReference type="SUPFAM" id="SSF52283">
    <property type="entry name" value="Formate/glycerate dehydrogenase catalytic domain-like"/>
    <property type="match status" value="1"/>
</dbReference>
<dbReference type="SUPFAM" id="SSF51735">
    <property type="entry name" value="NAD(P)-binding Rossmann-fold domains"/>
    <property type="match status" value="1"/>
</dbReference>
<dbReference type="PROSITE" id="PS00671">
    <property type="entry name" value="D_2_HYDROXYACID_DH_3"/>
    <property type="match status" value="1"/>
</dbReference>
<reference key="1">
    <citation type="submission" date="2006-09" db="EMBL/GenBank/DDBJ databases">
        <title>Complete sequence of chromosome 1 of Shewanella sp. ANA-3.</title>
        <authorList>
            <person name="Copeland A."/>
            <person name="Lucas S."/>
            <person name="Lapidus A."/>
            <person name="Barry K."/>
            <person name="Detter J.C."/>
            <person name="Glavina del Rio T."/>
            <person name="Hammon N."/>
            <person name="Israni S."/>
            <person name="Dalin E."/>
            <person name="Tice H."/>
            <person name="Pitluck S."/>
            <person name="Chertkov O."/>
            <person name="Brettin T."/>
            <person name="Bruce D."/>
            <person name="Han C."/>
            <person name="Tapia R."/>
            <person name="Gilna P."/>
            <person name="Schmutz J."/>
            <person name="Larimer F."/>
            <person name="Land M."/>
            <person name="Hauser L."/>
            <person name="Kyrpides N."/>
            <person name="Kim E."/>
            <person name="Newman D."/>
            <person name="Salticov C."/>
            <person name="Konstantinidis K."/>
            <person name="Klappenback J."/>
            <person name="Tiedje J."/>
            <person name="Richardson P."/>
        </authorList>
    </citation>
    <scope>NUCLEOTIDE SEQUENCE [LARGE SCALE GENOMIC DNA]</scope>
    <source>
        <strain>ANA-3</strain>
    </source>
</reference>
<sequence length="376" mass="41330">MKIVVDENMPYVEPLFGALGEIIPVNGRTLTPEQVQDADVLLVRSVTRVNAALLDANSKLKFVGSATIGTDHVDLAYLAGRGIPFSNAPGCNATAVGEFAFIAMLELAARFNSPLKGKVVGIVGAGNTGSATAKCLEAYGIKVLLNDPIKAAEGDPRHFVSLETLLHEADIISLHVPITRTGEHKTLHLFDEARMMSLKPNTWLLNCCRGDVIDNQALIKVKEQRDDLKLVLDVWEGEPNPMPELVPFAEFATPHIAGYSLEGKARGTFMLYQKLCELLAIPATKRLSELLPPFHFKAVELEQAPDEKALLQLARFVYDLRDDDAVFRNGFARSNGFDTMRKNHKHRREFSALALAYHGQSEVDWLSNLGFSGVGR</sequence>
<gene>
    <name evidence="1" type="primary">pdxB</name>
    <name type="ordered locus">Shewana3_1476</name>
</gene>
<organism>
    <name type="scientific">Shewanella sp. (strain ANA-3)</name>
    <dbReference type="NCBI Taxonomy" id="94122"/>
    <lineage>
        <taxon>Bacteria</taxon>
        <taxon>Pseudomonadati</taxon>
        <taxon>Pseudomonadota</taxon>
        <taxon>Gammaproteobacteria</taxon>
        <taxon>Alteromonadales</taxon>
        <taxon>Shewanellaceae</taxon>
        <taxon>Shewanella</taxon>
    </lineage>
</organism>
<proteinExistence type="inferred from homology"/>
<evidence type="ECO:0000255" key="1">
    <source>
        <dbReference type="HAMAP-Rule" id="MF_01825"/>
    </source>
</evidence>